<organism>
    <name type="scientific">Schizosaccharomyces pombe (strain 972 / ATCC 24843)</name>
    <name type="common">Fission yeast</name>
    <dbReference type="NCBI Taxonomy" id="284812"/>
    <lineage>
        <taxon>Eukaryota</taxon>
        <taxon>Fungi</taxon>
        <taxon>Dikarya</taxon>
        <taxon>Ascomycota</taxon>
        <taxon>Taphrinomycotina</taxon>
        <taxon>Schizosaccharomycetes</taxon>
        <taxon>Schizosaccharomycetales</taxon>
        <taxon>Schizosaccharomycetaceae</taxon>
        <taxon>Schizosaccharomyces</taxon>
    </lineage>
</organism>
<dbReference type="EMBL" id="X92682">
    <property type="protein sequence ID" value="CAA63366.1"/>
    <property type="molecule type" value="mRNA"/>
</dbReference>
<dbReference type="EMBL" id="CU329671">
    <property type="protein sequence ID" value="CAB46777.2"/>
    <property type="molecule type" value="Genomic_DNA"/>
</dbReference>
<dbReference type="PIR" id="T40280">
    <property type="entry name" value="T40280"/>
</dbReference>
<dbReference type="RefSeq" id="NP_596750.2">
    <property type="nucleotide sequence ID" value="NM_001023770.2"/>
</dbReference>
<dbReference type="PDB" id="4B0Z">
    <property type="method" value="X-ray"/>
    <property type="resolution" value="1.58 A"/>
    <property type="chains" value="A/B=1-224"/>
</dbReference>
<dbReference type="PDBsum" id="4B0Z"/>
<dbReference type="SMR" id="P50524"/>
<dbReference type="BioGRID" id="276569">
    <property type="interactions" value="33"/>
</dbReference>
<dbReference type="ComplexPortal" id="CPX-9077">
    <property type="entry name" value="26S proteasome complex"/>
</dbReference>
<dbReference type="FunCoup" id="P50524">
    <property type="interactions" value="644"/>
</dbReference>
<dbReference type="IntAct" id="P50524">
    <property type="interactions" value="2"/>
</dbReference>
<dbReference type="STRING" id="284812.P50524"/>
<dbReference type="iPTMnet" id="P50524"/>
<dbReference type="PaxDb" id="4896-SPBC16G5.01.1"/>
<dbReference type="EnsemblFungi" id="SPBC16G5.01.1">
    <property type="protein sequence ID" value="SPBC16G5.01.1:pep"/>
    <property type="gene ID" value="SPBC16G5.01"/>
</dbReference>
<dbReference type="GeneID" id="2540025"/>
<dbReference type="KEGG" id="spo:2540025"/>
<dbReference type="PomBase" id="SPBC16G5.01">
    <property type="gene designation" value="rpn12"/>
</dbReference>
<dbReference type="VEuPathDB" id="FungiDB:SPBC16G5.01"/>
<dbReference type="eggNOG" id="KOG3151">
    <property type="taxonomic scope" value="Eukaryota"/>
</dbReference>
<dbReference type="HOGENOM" id="CLU_046003_2_1_1"/>
<dbReference type="InParanoid" id="P50524"/>
<dbReference type="OMA" id="HIMDGYF"/>
<dbReference type="PhylomeDB" id="P50524"/>
<dbReference type="Reactome" id="R-SPO-1236978">
    <property type="pathway name" value="Cross-presentation of soluble exogenous antigens (endosomes)"/>
</dbReference>
<dbReference type="Reactome" id="R-SPO-350562">
    <property type="pathway name" value="Regulation of ornithine decarboxylase (ODC)"/>
</dbReference>
<dbReference type="Reactome" id="R-SPO-5687128">
    <property type="pathway name" value="MAPK6/MAPK4 signaling"/>
</dbReference>
<dbReference type="Reactome" id="R-SPO-5689603">
    <property type="pathway name" value="UCH proteinases"/>
</dbReference>
<dbReference type="Reactome" id="R-SPO-5689880">
    <property type="pathway name" value="Ub-specific processing proteases"/>
</dbReference>
<dbReference type="Reactome" id="R-SPO-68949">
    <property type="pathway name" value="Orc1 removal from chromatin"/>
</dbReference>
<dbReference type="Reactome" id="R-SPO-69017">
    <property type="pathway name" value="CDK-mediated phosphorylation and removal of Cdc6"/>
</dbReference>
<dbReference type="Reactome" id="R-SPO-69601">
    <property type="pathway name" value="Ubiquitin Mediated Degradation of Phosphorylated Cdc25A"/>
</dbReference>
<dbReference type="Reactome" id="R-SPO-75815">
    <property type="pathway name" value="Ubiquitin-dependent degradation of Cyclin D"/>
</dbReference>
<dbReference type="Reactome" id="R-SPO-8854050">
    <property type="pathway name" value="FBXL7 down-regulates AURKA during mitotic entry and in early mitosis"/>
</dbReference>
<dbReference type="Reactome" id="R-SPO-8948751">
    <property type="pathway name" value="Regulation of PTEN stability and activity"/>
</dbReference>
<dbReference type="Reactome" id="R-SPO-8951664">
    <property type="pathway name" value="Neddylation"/>
</dbReference>
<dbReference type="Reactome" id="R-SPO-9755511">
    <property type="pathway name" value="KEAP1-NFE2L2 pathway"/>
</dbReference>
<dbReference type="Reactome" id="R-SPO-983168">
    <property type="pathway name" value="Antigen processing: Ubiquitination &amp; Proteasome degradation"/>
</dbReference>
<dbReference type="Reactome" id="R-SPO-9907900">
    <property type="pathway name" value="Proteasome assembly"/>
</dbReference>
<dbReference type="EvolutionaryTrace" id="P50524"/>
<dbReference type="PRO" id="PR:P50524"/>
<dbReference type="Proteomes" id="UP000002485">
    <property type="component" value="Chromosome II"/>
</dbReference>
<dbReference type="GO" id="GO:0000785">
    <property type="term" value="C:chromatin"/>
    <property type="evidence" value="ECO:0000314"/>
    <property type="project" value="PomBase"/>
</dbReference>
<dbReference type="GO" id="GO:0005829">
    <property type="term" value="C:cytosol"/>
    <property type="evidence" value="ECO:0007005"/>
    <property type="project" value="PomBase"/>
</dbReference>
<dbReference type="GO" id="GO:0034399">
    <property type="term" value="C:nuclear periphery"/>
    <property type="evidence" value="ECO:0000314"/>
    <property type="project" value="PomBase"/>
</dbReference>
<dbReference type="GO" id="GO:0005634">
    <property type="term" value="C:nucleus"/>
    <property type="evidence" value="ECO:0007005"/>
    <property type="project" value="PomBase"/>
</dbReference>
<dbReference type="GO" id="GO:0008541">
    <property type="term" value="C:proteasome regulatory particle, lid subcomplex"/>
    <property type="evidence" value="ECO:0000314"/>
    <property type="project" value="PomBase"/>
</dbReference>
<dbReference type="GO" id="GO:0043161">
    <property type="term" value="P:proteasome-mediated ubiquitin-dependent protein catabolic process"/>
    <property type="evidence" value="ECO:0000316"/>
    <property type="project" value="PomBase"/>
</dbReference>
<dbReference type="FunFam" id="1.25.40.990:FF:000001">
    <property type="entry name" value="26S proteasome non-ATPase regulatory subunit"/>
    <property type="match status" value="1"/>
</dbReference>
<dbReference type="Gene3D" id="1.25.40.990">
    <property type="match status" value="1"/>
</dbReference>
<dbReference type="InterPro" id="IPR006746">
    <property type="entry name" value="26S_Psome_Rpn12"/>
</dbReference>
<dbReference type="InterPro" id="IPR033464">
    <property type="entry name" value="CSN8_PSD8_EIF3K"/>
</dbReference>
<dbReference type="InterPro" id="IPR000717">
    <property type="entry name" value="PCI_dom"/>
</dbReference>
<dbReference type="PANTHER" id="PTHR12387">
    <property type="entry name" value="26S PROTEASOME NON-ATPASE REGULATORY SUBUNIT 8"/>
    <property type="match status" value="1"/>
</dbReference>
<dbReference type="PANTHER" id="PTHR12387:SF0">
    <property type="entry name" value="26S PROTEASOME NON-ATPASE REGULATORY SUBUNIT 8"/>
    <property type="match status" value="1"/>
</dbReference>
<dbReference type="Pfam" id="PF10075">
    <property type="entry name" value="CSN8_PSD8_EIF3K"/>
    <property type="match status" value="1"/>
</dbReference>
<dbReference type="PROSITE" id="PS50250">
    <property type="entry name" value="PCI"/>
    <property type="match status" value="1"/>
</dbReference>
<sequence>MSTLDLNHLADLYDRKDWNACKKELLKLKVELAKQNLFVPTSDKEKASFARNVFEYGVLVSIQTCDIESFARYASQVIPFYHDSLVPSSRMGLVTGLNLLYLLSENRIAEFHTALESVPDKSLFERDPYVEWVISLEQNVMEGAFDKVASMIRSCNFPEFSYFMKIVMSMVRNEIATCAEKVYSEIPLSNATSLLYLENTKETEKLAEERGWDIRDGVIYFPKEANALETEDGMLIDEEDELELPPTASKHTISSIRQLLSYTSELEQIV</sequence>
<proteinExistence type="evidence at protein level"/>
<feature type="chain" id="PRO_0000173850" description="26S proteasome regulatory subunit rpn12">
    <location>
        <begin position="1"/>
        <end position="270"/>
    </location>
</feature>
<feature type="domain" description="PCI" evidence="1">
    <location>
        <begin position="65"/>
        <end position="237"/>
    </location>
</feature>
<feature type="helix" evidence="3">
    <location>
        <begin position="7"/>
        <end position="14"/>
    </location>
</feature>
<feature type="helix" evidence="3">
    <location>
        <begin position="18"/>
        <end position="34"/>
    </location>
</feature>
<feature type="helix" evidence="3">
    <location>
        <begin position="44"/>
        <end position="63"/>
    </location>
</feature>
<feature type="helix" evidence="3">
    <location>
        <begin position="67"/>
        <end position="81"/>
    </location>
</feature>
<feature type="helix" evidence="3">
    <location>
        <begin position="91"/>
        <end position="104"/>
    </location>
</feature>
<feature type="helix" evidence="3">
    <location>
        <begin position="108"/>
        <end position="117"/>
    </location>
</feature>
<feature type="helix" evidence="3">
    <location>
        <begin position="123"/>
        <end position="126"/>
    </location>
</feature>
<feature type="helix" evidence="3">
    <location>
        <begin position="128"/>
        <end position="141"/>
    </location>
</feature>
<feature type="helix" evidence="3">
    <location>
        <begin position="145"/>
        <end position="153"/>
    </location>
</feature>
<feature type="helix" evidence="3">
    <location>
        <begin position="158"/>
        <end position="160"/>
    </location>
</feature>
<feature type="helix" evidence="3">
    <location>
        <begin position="161"/>
        <end position="182"/>
    </location>
</feature>
<feature type="strand" evidence="3">
    <location>
        <begin position="184"/>
        <end position="187"/>
    </location>
</feature>
<feature type="helix" evidence="3">
    <location>
        <begin position="188"/>
        <end position="194"/>
    </location>
</feature>
<feature type="helix" evidence="3">
    <location>
        <begin position="200"/>
        <end position="210"/>
    </location>
</feature>
<feature type="strand" evidence="3">
    <location>
        <begin position="213"/>
        <end position="215"/>
    </location>
</feature>
<feature type="strand" evidence="3">
    <location>
        <begin position="218"/>
        <end position="220"/>
    </location>
</feature>
<evidence type="ECO:0000255" key="1">
    <source>
        <dbReference type="PROSITE-ProRule" id="PRU01185"/>
    </source>
</evidence>
<evidence type="ECO:0000305" key="2"/>
<evidence type="ECO:0007829" key="3">
    <source>
        <dbReference type="PDB" id="4B0Z"/>
    </source>
</evidence>
<name>RPN12_SCHPO</name>
<gene>
    <name type="primary">rpn12</name>
    <name type="synonym">mts3</name>
    <name type="ORF">SPBC16G5.01</name>
    <name type="ORF">SPBC342.07</name>
</gene>
<keyword id="KW-0002">3D-structure</keyword>
<keyword id="KW-0647">Proteasome</keyword>
<keyword id="KW-1185">Reference proteome</keyword>
<reference key="1">
    <citation type="journal article" date="1996" name="J. Biol. Chem.">
        <title>A conditional lethal mutant in the fission yeast 26 S protease subunit mts3+ is defective in metaphase to anaphase transition.</title>
        <authorList>
            <person name="Gordon C.B."/>
            <person name="McGurk G."/>
            <person name="Wallace M."/>
            <person name="Hastie N.D."/>
        </authorList>
    </citation>
    <scope>NUCLEOTIDE SEQUENCE [MRNA]</scope>
</reference>
<reference key="2">
    <citation type="journal article" date="2002" name="Nature">
        <title>The genome sequence of Schizosaccharomyces pombe.</title>
        <authorList>
            <person name="Wood V."/>
            <person name="Gwilliam R."/>
            <person name="Rajandream M.A."/>
            <person name="Lyne M.H."/>
            <person name="Lyne R."/>
            <person name="Stewart A."/>
            <person name="Sgouros J.G."/>
            <person name="Peat N."/>
            <person name="Hayles J."/>
            <person name="Baker S.G."/>
            <person name="Basham D."/>
            <person name="Bowman S."/>
            <person name="Brooks K."/>
            <person name="Brown D."/>
            <person name="Brown S."/>
            <person name="Chillingworth T."/>
            <person name="Churcher C.M."/>
            <person name="Collins M."/>
            <person name="Connor R."/>
            <person name="Cronin A."/>
            <person name="Davis P."/>
            <person name="Feltwell T."/>
            <person name="Fraser A."/>
            <person name="Gentles S."/>
            <person name="Goble A."/>
            <person name="Hamlin N."/>
            <person name="Harris D.E."/>
            <person name="Hidalgo J."/>
            <person name="Hodgson G."/>
            <person name="Holroyd S."/>
            <person name="Hornsby T."/>
            <person name="Howarth S."/>
            <person name="Huckle E.J."/>
            <person name="Hunt S."/>
            <person name="Jagels K."/>
            <person name="James K.D."/>
            <person name="Jones L."/>
            <person name="Jones M."/>
            <person name="Leather S."/>
            <person name="McDonald S."/>
            <person name="McLean J."/>
            <person name="Mooney P."/>
            <person name="Moule S."/>
            <person name="Mungall K.L."/>
            <person name="Murphy L.D."/>
            <person name="Niblett D."/>
            <person name="Odell C."/>
            <person name="Oliver K."/>
            <person name="O'Neil S."/>
            <person name="Pearson D."/>
            <person name="Quail M.A."/>
            <person name="Rabbinowitsch E."/>
            <person name="Rutherford K.M."/>
            <person name="Rutter S."/>
            <person name="Saunders D."/>
            <person name="Seeger K."/>
            <person name="Sharp S."/>
            <person name="Skelton J."/>
            <person name="Simmonds M.N."/>
            <person name="Squares R."/>
            <person name="Squares S."/>
            <person name="Stevens K."/>
            <person name="Taylor K."/>
            <person name="Taylor R.G."/>
            <person name="Tivey A."/>
            <person name="Walsh S.V."/>
            <person name="Warren T."/>
            <person name="Whitehead S."/>
            <person name="Woodward J.R."/>
            <person name="Volckaert G."/>
            <person name="Aert R."/>
            <person name="Robben J."/>
            <person name="Grymonprez B."/>
            <person name="Weltjens I."/>
            <person name="Vanstreels E."/>
            <person name="Rieger M."/>
            <person name="Schaefer M."/>
            <person name="Mueller-Auer S."/>
            <person name="Gabel C."/>
            <person name="Fuchs M."/>
            <person name="Duesterhoeft A."/>
            <person name="Fritzc C."/>
            <person name="Holzer E."/>
            <person name="Moestl D."/>
            <person name="Hilbert H."/>
            <person name="Borzym K."/>
            <person name="Langer I."/>
            <person name="Beck A."/>
            <person name="Lehrach H."/>
            <person name="Reinhardt R."/>
            <person name="Pohl T.M."/>
            <person name="Eger P."/>
            <person name="Zimmermann W."/>
            <person name="Wedler H."/>
            <person name="Wambutt R."/>
            <person name="Purnelle B."/>
            <person name="Goffeau A."/>
            <person name="Cadieu E."/>
            <person name="Dreano S."/>
            <person name="Gloux S."/>
            <person name="Lelaure V."/>
            <person name="Mottier S."/>
            <person name="Galibert F."/>
            <person name="Aves S.J."/>
            <person name="Xiang Z."/>
            <person name="Hunt C."/>
            <person name="Moore K."/>
            <person name="Hurst S.M."/>
            <person name="Lucas M."/>
            <person name="Rochet M."/>
            <person name="Gaillardin C."/>
            <person name="Tallada V.A."/>
            <person name="Garzon A."/>
            <person name="Thode G."/>
            <person name="Daga R.R."/>
            <person name="Cruzado L."/>
            <person name="Jimenez J."/>
            <person name="Sanchez M."/>
            <person name="del Rey F."/>
            <person name="Benito J."/>
            <person name="Dominguez A."/>
            <person name="Revuelta J.L."/>
            <person name="Moreno S."/>
            <person name="Armstrong J."/>
            <person name="Forsburg S.L."/>
            <person name="Cerutti L."/>
            <person name="Lowe T."/>
            <person name="McCombie W.R."/>
            <person name="Paulsen I."/>
            <person name="Potashkin J."/>
            <person name="Shpakovski G.V."/>
            <person name="Ussery D."/>
            <person name="Barrell B.G."/>
            <person name="Nurse P."/>
        </authorList>
    </citation>
    <scope>NUCLEOTIDE SEQUENCE [LARGE SCALE GENOMIC DNA]</scope>
    <source>
        <strain>972 / ATCC 24843</strain>
    </source>
</reference>
<accession>P50524</accession>
<accession>Q9UUC3</accession>
<comment type="function">
    <text>Acts as a regulatory subunit of the 26S proteasome which is involved in the ATP-dependent degradation of ubiquitinated proteins.</text>
</comment>
<comment type="interaction">
    <interactant intactId="EBI-1152607">
        <id>P50524</id>
    </interactant>
    <interactant intactId="EBI-1152591">
        <id>P38937</id>
        <label>cut8</label>
    </interactant>
    <organismsDiffer>false</organismsDiffer>
    <experiments>2</experiments>
</comment>
<comment type="similarity">
    <text evidence="2">Belongs to the proteasome subunit S14 family.</text>
</comment>
<protein>
    <recommendedName>
        <fullName>26S proteasome regulatory subunit rpn12</fullName>
    </recommendedName>
</protein>